<dbReference type="EMBL" id="Y07762">
    <property type="protein sequence ID" value="CAA69068.1"/>
    <property type="molecule type" value="mRNA"/>
</dbReference>
<dbReference type="EMBL" id="U83184">
    <property type="protein sequence ID" value="AAB93835.1"/>
    <property type="molecule type" value="mRNA"/>
</dbReference>
<dbReference type="RefSeq" id="NP_001070881.1">
    <property type="nucleotide sequence ID" value="NM_001077413.1"/>
</dbReference>
<dbReference type="SMR" id="O02744"/>
<dbReference type="FunCoup" id="O02744">
    <property type="interactions" value="33"/>
</dbReference>
<dbReference type="STRING" id="9685.ENSFCAP00000026531"/>
<dbReference type="GlyCosmos" id="O02744">
    <property type="glycosylation" value="2 sites, No reported glycans"/>
</dbReference>
<dbReference type="PaxDb" id="9685-ENSFCAP00000014439"/>
<dbReference type="GeneID" id="768273"/>
<dbReference type="KEGG" id="fca:768273"/>
<dbReference type="CTD" id="3593"/>
<dbReference type="eggNOG" id="ENOG502RZMA">
    <property type="taxonomic scope" value="Eukaryota"/>
</dbReference>
<dbReference type="InParanoid" id="O02744"/>
<dbReference type="OrthoDB" id="8670716at2759"/>
<dbReference type="TreeFam" id="TF334829"/>
<dbReference type="Proteomes" id="UP000011712">
    <property type="component" value="Unplaced"/>
</dbReference>
<dbReference type="GO" id="GO:0043514">
    <property type="term" value="C:interleukin-12 complex"/>
    <property type="evidence" value="ECO:0000318"/>
    <property type="project" value="GO_Central"/>
</dbReference>
<dbReference type="GO" id="GO:0016020">
    <property type="term" value="C:membrane"/>
    <property type="evidence" value="ECO:0007669"/>
    <property type="project" value="InterPro"/>
</dbReference>
<dbReference type="GO" id="GO:0005125">
    <property type="term" value="F:cytokine activity"/>
    <property type="evidence" value="ECO:0007669"/>
    <property type="project" value="UniProtKB-KW"/>
</dbReference>
<dbReference type="GO" id="GO:0004896">
    <property type="term" value="F:cytokine receptor activity"/>
    <property type="evidence" value="ECO:0007669"/>
    <property type="project" value="InterPro"/>
</dbReference>
<dbReference type="GO" id="GO:0042164">
    <property type="term" value="F:interleukin-12 alpha subunit binding"/>
    <property type="evidence" value="ECO:0000318"/>
    <property type="project" value="GO_Central"/>
</dbReference>
<dbReference type="GO" id="GO:0005143">
    <property type="term" value="F:interleukin-12 receptor binding"/>
    <property type="evidence" value="ECO:0000318"/>
    <property type="project" value="GO_Central"/>
</dbReference>
<dbReference type="GO" id="GO:0035722">
    <property type="term" value="P:interleukin-12-mediated signaling pathway"/>
    <property type="evidence" value="ECO:0000318"/>
    <property type="project" value="GO_Central"/>
</dbReference>
<dbReference type="CDD" id="cd00063">
    <property type="entry name" value="FN3"/>
    <property type="match status" value="1"/>
</dbReference>
<dbReference type="FunFam" id="2.60.40.10:FF:000959">
    <property type="entry name" value="Interleukin-12 subunit beta"/>
    <property type="match status" value="1"/>
</dbReference>
<dbReference type="FunFam" id="2.60.40.10:FF:001008">
    <property type="entry name" value="Interleukin-12 subunit beta"/>
    <property type="match status" value="1"/>
</dbReference>
<dbReference type="FunFam" id="2.60.40.10:FF:001009">
    <property type="entry name" value="Interleukin-12 subunit beta"/>
    <property type="match status" value="1"/>
</dbReference>
<dbReference type="Gene3D" id="2.60.40.10">
    <property type="entry name" value="Immunoglobulins"/>
    <property type="match status" value="3"/>
</dbReference>
<dbReference type="InterPro" id="IPR003961">
    <property type="entry name" value="FN3_dom"/>
</dbReference>
<dbReference type="InterPro" id="IPR036116">
    <property type="entry name" value="FN3_sf"/>
</dbReference>
<dbReference type="InterPro" id="IPR003530">
    <property type="entry name" value="Hematopoietin_rcpt_L_F3_CS"/>
</dbReference>
<dbReference type="InterPro" id="IPR007110">
    <property type="entry name" value="Ig-like_dom"/>
</dbReference>
<dbReference type="InterPro" id="IPR036179">
    <property type="entry name" value="Ig-like_dom_sf"/>
</dbReference>
<dbReference type="InterPro" id="IPR013783">
    <property type="entry name" value="Ig-like_fold"/>
</dbReference>
<dbReference type="InterPro" id="IPR003598">
    <property type="entry name" value="Ig_sub2"/>
</dbReference>
<dbReference type="InterPro" id="IPR050676">
    <property type="entry name" value="IL-12"/>
</dbReference>
<dbReference type="InterPro" id="IPR015528">
    <property type="entry name" value="IL-12_beta"/>
</dbReference>
<dbReference type="InterPro" id="IPR019482">
    <property type="entry name" value="IL-12_beta_cen-dom"/>
</dbReference>
<dbReference type="PANTHER" id="PTHR48485:SF4">
    <property type="entry name" value="INTERLEUKIN-12 SUBUNIT BETA"/>
    <property type="match status" value="1"/>
</dbReference>
<dbReference type="PANTHER" id="PTHR48485">
    <property type="entry name" value="INTERLEUKIN-12 SUBUNIT BETA-RELATED"/>
    <property type="match status" value="1"/>
</dbReference>
<dbReference type="Pfam" id="PF10420">
    <property type="entry name" value="IL12p40_C"/>
    <property type="match status" value="1"/>
</dbReference>
<dbReference type="PIRSF" id="PIRSF038007">
    <property type="entry name" value="IL_12_beta"/>
    <property type="match status" value="1"/>
</dbReference>
<dbReference type="PRINTS" id="PR01928">
    <property type="entry name" value="INTRLEUKN12B"/>
</dbReference>
<dbReference type="SMART" id="SM00408">
    <property type="entry name" value="IGc2"/>
    <property type="match status" value="1"/>
</dbReference>
<dbReference type="SUPFAM" id="SSF49265">
    <property type="entry name" value="Fibronectin type III"/>
    <property type="match status" value="2"/>
</dbReference>
<dbReference type="SUPFAM" id="SSF48726">
    <property type="entry name" value="Immunoglobulin"/>
    <property type="match status" value="1"/>
</dbReference>
<dbReference type="PROSITE" id="PS50853">
    <property type="entry name" value="FN3"/>
    <property type="match status" value="1"/>
</dbReference>
<dbReference type="PROSITE" id="PS01354">
    <property type="entry name" value="HEMATOPO_REC_L_F3"/>
    <property type="match status" value="1"/>
</dbReference>
<dbReference type="PROSITE" id="PS50835">
    <property type="entry name" value="IG_LIKE"/>
    <property type="match status" value="1"/>
</dbReference>
<comment type="function">
    <text evidence="1">Cytokine that can act as a growth factor for activated T and NK cells, enhance the lytic activity of NK/lymphokine-activated killer cells, and stimulate the production of IFN-gamma by resting PBMC.</text>
</comment>
<comment type="function">
    <text evidence="1">Associates with IL23A to form the IL-23 interleukin, a heterodimeric cytokine which functions in innate and adaptive immunity. IL-23 may constitute with IL-17 an acute response to infection in peripheral tissues. IL-23 binds to a heterodimeric receptor complex composed of IL12RB1 and IL23R, activates the Jak-Stat signaling cascade, stimulates memory rather than naive T-cells and promotes production of pro-inflammatory cytokines. IL-23 induces autoimmune inflammation and thus may be responsible for autoimmune inflammatory diseases and may be important for tumorigenesis (By similarity).</text>
</comment>
<comment type="subunit">
    <text evidence="2 3">Heterodimer with IL12A; disulfide-linked. The heterodimer is known as interleukin IL-12. Heterodimer with IL23A; disulfide-linked. The heterodimer is known as interleukin IL-23. Also secreted as a monomer. Interacts with NBR1; this interaction promotes IL-12 secretion (By similarity).</text>
</comment>
<comment type="subcellular location">
    <subcellularLocation>
        <location>Secreted</location>
    </subcellularLocation>
</comment>
<comment type="similarity">
    <text evidence="7">Belongs to the IL-12B family.</text>
</comment>
<accession>O02744</accession>
<accession>O46671</accession>
<proteinExistence type="evidence at transcript level"/>
<evidence type="ECO:0000250" key="1"/>
<evidence type="ECO:0000250" key="2">
    <source>
        <dbReference type="UniProtKB" id="P29460"/>
    </source>
</evidence>
<evidence type="ECO:0000250" key="3">
    <source>
        <dbReference type="UniProtKB" id="P43432"/>
    </source>
</evidence>
<evidence type="ECO:0000255" key="4"/>
<evidence type="ECO:0000255" key="5">
    <source>
        <dbReference type="PROSITE-ProRule" id="PRU00114"/>
    </source>
</evidence>
<evidence type="ECO:0000255" key="6">
    <source>
        <dbReference type="PROSITE-ProRule" id="PRU00316"/>
    </source>
</evidence>
<evidence type="ECO:0000305" key="7"/>
<protein>
    <recommendedName>
        <fullName>Interleukin-12 subunit beta</fullName>
        <shortName>IL-12B</shortName>
    </recommendedName>
    <alternativeName>
        <fullName>Cytotoxic lymphocyte maturation factor 40 kDa subunit</fullName>
        <shortName>CLMF p40</shortName>
    </alternativeName>
    <alternativeName>
        <fullName>IL-12 subunit p40</fullName>
    </alternativeName>
</protein>
<name>IL12B_FELCA</name>
<keyword id="KW-0202">Cytokine</keyword>
<keyword id="KW-1015">Disulfide bond</keyword>
<keyword id="KW-0325">Glycoprotein</keyword>
<keyword id="KW-0393">Immunoglobulin domain</keyword>
<keyword id="KW-1185">Reference proteome</keyword>
<keyword id="KW-0964">Secreted</keyword>
<keyword id="KW-0732">Signal</keyword>
<sequence>MHPQQLVIAWLSLVLLAPPLMAIWELEKNVYVVELDWHPDAPGEMVVLTCNTPEEDDITWTSDQSSEVLGSGKTLTIQVKEFADAGQYTCHKGGEVLSHSFLLIHKKEDGIWSTDILREQKESKNKIFLKCEAKNYSGRFTCWWLTAISTDLKFTVKSSRGSSDPQEVTCGAATLSAEKVRVDNRDYKKYTVECQEGSACPAAEESLPIEVVVDAIHKLKYENYTSSFFIRDIIKPDPPKNLQLKPLKNSRHVEVSWEYPDTWSTPHSYFSLTFGVQVQGKNNREKKDRLSVDKTSAKVVCHKDAKIRVQARDRYYSSSWSNWASVSCS</sequence>
<feature type="signal peptide" evidence="1">
    <location>
        <begin position="1"/>
        <end position="22"/>
    </location>
</feature>
<feature type="chain" id="PRO_0000010928" description="Interleukin-12 subunit beta">
    <location>
        <begin position="23"/>
        <end position="329"/>
    </location>
</feature>
<feature type="domain" description="Ig-like C2-type">
    <location>
        <begin position="23"/>
        <end position="106"/>
    </location>
</feature>
<feature type="domain" description="Fibronectin type-III" evidence="6">
    <location>
        <begin position="238"/>
        <end position="329"/>
    </location>
</feature>
<feature type="glycosylation site" description="N-linked (GlcNAc...) asparagine" evidence="4">
    <location>
        <position position="135"/>
    </location>
</feature>
<feature type="glycosylation site" description="N-linked (GlcNAc...) asparagine" evidence="4">
    <location>
        <position position="223"/>
    </location>
</feature>
<feature type="disulfide bond" evidence="5">
    <location>
        <begin position="50"/>
        <end position="90"/>
    </location>
</feature>
<feature type="disulfide bond" description="Interchain (with C-99 in IL12A and C-79 in IL23A)" evidence="2 5">
    <location>
        <position position="200"/>
    </location>
</feature>
<feature type="sequence conflict" description="In Ref. 2; AAB93835." evidence="7" ref="2">
    <original>L</original>
    <variation>F</variation>
    <location>
        <position position="11"/>
    </location>
</feature>
<feature type="sequence conflict" description="In Ref. 2; AAB93835." evidence="7" ref="2">
    <original>N</original>
    <variation>D</variation>
    <location>
        <position position="51"/>
    </location>
</feature>
<feature type="sequence conflict" description="In Ref. 2; AAB93835." evidence="7" ref="2">
    <original>E</original>
    <variation>G</variation>
    <location>
        <position position="167"/>
    </location>
</feature>
<organism>
    <name type="scientific">Felis catus</name>
    <name type="common">Cat</name>
    <name type="synonym">Felis silvestris catus</name>
    <dbReference type="NCBI Taxonomy" id="9685"/>
    <lineage>
        <taxon>Eukaryota</taxon>
        <taxon>Metazoa</taxon>
        <taxon>Chordata</taxon>
        <taxon>Craniata</taxon>
        <taxon>Vertebrata</taxon>
        <taxon>Euteleostomi</taxon>
        <taxon>Mammalia</taxon>
        <taxon>Eutheria</taxon>
        <taxon>Laurasiatheria</taxon>
        <taxon>Carnivora</taxon>
        <taxon>Feliformia</taxon>
        <taxon>Felidae</taxon>
        <taxon>Felinae</taxon>
        <taxon>Felis</taxon>
    </lineage>
</organism>
<gene>
    <name type="primary">IL12B</name>
</gene>
<reference key="1">
    <citation type="journal article" date="1997" name="Immunogenetics">
        <title>Molecular cloning of cat interleukin-12.</title>
        <authorList>
            <person name="Schijns V.E.C.J."/>
            <person name="Wierda C.M.H."/>
            <person name="Vahlenkamp T.W."/>
            <person name="Horzinek M.C."/>
        </authorList>
    </citation>
    <scope>NUCLEOTIDE SEQUENCE [MRNA]</scope>
    <source>
        <tissue>Peripheral blood</tissue>
    </source>
</reference>
<reference key="2">
    <citation type="journal article" date="1997" name="DNA Seq.">
        <title>Nucleotide and predicted peptide sequence of feline interleukin-12 (IL-12).</title>
        <authorList>
            <person name="Fehr D."/>
            <person name="Dean G.A."/>
            <person name="Huder J."/>
            <person name="Fan Z."/>
            <person name="Huettner S."/>
            <person name="Higgins J.W."/>
            <person name="Pedersen N.C."/>
            <person name="Lutz H."/>
        </authorList>
    </citation>
    <scope>NUCLEOTIDE SEQUENCE [MRNA]</scope>
</reference>